<keyword id="KW-0320">Glycogen biosynthesis</keyword>
<keyword id="KW-0328">Glycosyltransferase</keyword>
<keyword id="KW-1185">Reference proteome</keyword>
<keyword id="KW-0808">Transferase</keyword>
<accession>A3PBY3</accession>
<evidence type="ECO:0000255" key="1">
    <source>
        <dbReference type="HAMAP-Rule" id="MF_00484"/>
    </source>
</evidence>
<protein>
    <recommendedName>
        <fullName evidence="1">Glycogen synthase</fullName>
        <ecNumber evidence="1">2.4.1.21</ecNumber>
    </recommendedName>
    <alternativeName>
        <fullName evidence="1">Starch [bacterial glycogen] synthase</fullName>
    </alternativeName>
</protein>
<sequence length="483" mass="55066">MRILLAAAECAPMIKVGGMGDVVGSLPPSLIKLGHDVRVIIPGYGKLWSLLDVSNEPVFRANTMGTDFSVYEAKHPIHNYVIYLVGHPTFDSDQIYGGENEDWRFTFFASATAEFAWNCWKPQVLHCHDWHTGMIPVWMHQDPEISTVFTIHNLKYQGPWRWKLEKMTWCPWYMHGDHTMAAAMLYADRVNAVSPTYADEIKTHEYGESLEGLLNYISGKLRGILNGIDLDEWNPAKDSVLPAKFSINNLENRQENKKILQREMGLEVNPKKYLLGMVSRLVDQKGVDLLLQVSRRLLAYTDSQIAVLGTGDRYLESGLWQLALDYPGRFSVFLTYDDSLSRLIYGGSDAFLMPSRFEPCGISQLLAMRYGSIPIVRRVGGLVDTVLPHDPENNSGTGFCFDRFEPIDFYTSLVRSWEAFRHKDSWKLLQKRAMSQEFSWQRSALEYEIMYKDVCGIKEPSPDVAEVEKFSYGQSADPSLKKV</sequence>
<comment type="function">
    <text evidence="1">Synthesizes alpha-1,4-glucan chains using ADP-glucose.</text>
</comment>
<comment type="catalytic activity">
    <reaction evidence="1">
        <text>[(1-&gt;4)-alpha-D-glucosyl](n) + ADP-alpha-D-glucose = [(1-&gt;4)-alpha-D-glucosyl](n+1) + ADP + H(+)</text>
        <dbReference type="Rhea" id="RHEA:18189"/>
        <dbReference type="Rhea" id="RHEA-COMP:9584"/>
        <dbReference type="Rhea" id="RHEA-COMP:9587"/>
        <dbReference type="ChEBI" id="CHEBI:15378"/>
        <dbReference type="ChEBI" id="CHEBI:15444"/>
        <dbReference type="ChEBI" id="CHEBI:57498"/>
        <dbReference type="ChEBI" id="CHEBI:456216"/>
        <dbReference type="EC" id="2.4.1.21"/>
    </reaction>
</comment>
<comment type="pathway">
    <text evidence="1">Glycan biosynthesis; glycogen biosynthesis.</text>
</comment>
<comment type="similarity">
    <text evidence="1">Belongs to the glycosyltransferase 1 family. Bacterial/plant glycogen synthase subfamily.</text>
</comment>
<dbReference type="EC" id="2.4.1.21" evidence="1"/>
<dbReference type="EMBL" id="CP000576">
    <property type="protein sequence ID" value="ABO17258.1"/>
    <property type="molecule type" value="Genomic_DNA"/>
</dbReference>
<dbReference type="RefSeq" id="WP_011862625.1">
    <property type="nucleotide sequence ID" value="NC_009091.1"/>
</dbReference>
<dbReference type="SMR" id="A3PBY3"/>
<dbReference type="STRING" id="167546.P9301_06351"/>
<dbReference type="CAZy" id="GT5">
    <property type="family name" value="Glycosyltransferase Family 5"/>
</dbReference>
<dbReference type="KEGG" id="pmg:P9301_06351"/>
<dbReference type="eggNOG" id="COG0297">
    <property type="taxonomic scope" value="Bacteria"/>
</dbReference>
<dbReference type="HOGENOM" id="CLU_009583_18_2_3"/>
<dbReference type="OrthoDB" id="9808590at2"/>
<dbReference type="UniPathway" id="UPA00164"/>
<dbReference type="Proteomes" id="UP000001430">
    <property type="component" value="Chromosome"/>
</dbReference>
<dbReference type="GO" id="GO:0009011">
    <property type="term" value="F:alpha-1,4-glucan glucosyltransferase (ADP-glucose donor) activity"/>
    <property type="evidence" value="ECO:0007669"/>
    <property type="project" value="UniProtKB-UniRule"/>
</dbReference>
<dbReference type="GO" id="GO:0004373">
    <property type="term" value="F:alpha-1,4-glucan glucosyltransferase (UDP-glucose donor) activity"/>
    <property type="evidence" value="ECO:0007669"/>
    <property type="project" value="InterPro"/>
</dbReference>
<dbReference type="GO" id="GO:0005978">
    <property type="term" value="P:glycogen biosynthetic process"/>
    <property type="evidence" value="ECO:0007669"/>
    <property type="project" value="UniProtKB-UniRule"/>
</dbReference>
<dbReference type="CDD" id="cd03791">
    <property type="entry name" value="GT5_Glycogen_synthase_DULL1-like"/>
    <property type="match status" value="1"/>
</dbReference>
<dbReference type="Gene3D" id="3.40.50.2000">
    <property type="entry name" value="Glycogen Phosphorylase B"/>
    <property type="match status" value="2"/>
</dbReference>
<dbReference type="HAMAP" id="MF_00484">
    <property type="entry name" value="Glycogen_synth"/>
    <property type="match status" value="1"/>
</dbReference>
<dbReference type="InterPro" id="IPR001296">
    <property type="entry name" value="Glyco_trans_1"/>
</dbReference>
<dbReference type="InterPro" id="IPR011835">
    <property type="entry name" value="GS/SS"/>
</dbReference>
<dbReference type="InterPro" id="IPR013534">
    <property type="entry name" value="Starch_synth_cat_dom"/>
</dbReference>
<dbReference type="NCBIfam" id="TIGR02095">
    <property type="entry name" value="glgA"/>
    <property type="match status" value="1"/>
</dbReference>
<dbReference type="NCBIfam" id="NF001900">
    <property type="entry name" value="PRK00654.1-3"/>
    <property type="match status" value="1"/>
</dbReference>
<dbReference type="PANTHER" id="PTHR45825:SF11">
    <property type="entry name" value="ALPHA AMYLASE DOMAIN-CONTAINING PROTEIN"/>
    <property type="match status" value="1"/>
</dbReference>
<dbReference type="PANTHER" id="PTHR45825">
    <property type="entry name" value="GRANULE-BOUND STARCH SYNTHASE 1, CHLOROPLASTIC/AMYLOPLASTIC"/>
    <property type="match status" value="1"/>
</dbReference>
<dbReference type="Pfam" id="PF08323">
    <property type="entry name" value="Glyco_transf_5"/>
    <property type="match status" value="1"/>
</dbReference>
<dbReference type="Pfam" id="PF00534">
    <property type="entry name" value="Glycos_transf_1"/>
    <property type="match status" value="1"/>
</dbReference>
<dbReference type="SUPFAM" id="SSF53756">
    <property type="entry name" value="UDP-Glycosyltransferase/glycogen phosphorylase"/>
    <property type="match status" value="1"/>
</dbReference>
<organism>
    <name type="scientific">Prochlorococcus marinus (strain MIT 9301)</name>
    <dbReference type="NCBI Taxonomy" id="167546"/>
    <lineage>
        <taxon>Bacteria</taxon>
        <taxon>Bacillati</taxon>
        <taxon>Cyanobacteriota</taxon>
        <taxon>Cyanophyceae</taxon>
        <taxon>Synechococcales</taxon>
        <taxon>Prochlorococcaceae</taxon>
        <taxon>Prochlorococcus</taxon>
    </lineage>
</organism>
<proteinExistence type="inferred from homology"/>
<feature type="chain" id="PRO_1000014373" description="Glycogen synthase">
    <location>
        <begin position="1"/>
        <end position="483"/>
    </location>
</feature>
<feature type="binding site" evidence="1">
    <location>
        <position position="15"/>
    </location>
    <ligand>
        <name>ADP-alpha-D-glucose</name>
        <dbReference type="ChEBI" id="CHEBI:57498"/>
    </ligand>
</feature>
<reference key="1">
    <citation type="journal article" date="2007" name="PLoS Genet.">
        <title>Patterns and implications of gene gain and loss in the evolution of Prochlorococcus.</title>
        <authorList>
            <person name="Kettler G.C."/>
            <person name="Martiny A.C."/>
            <person name="Huang K."/>
            <person name="Zucker J."/>
            <person name="Coleman M.L."/>
            <person name="Rodrigue S."/>
            <person name="Chen F."/>
            <person name="Lapidus A."/>
            <person name="Ferriera S."/>
            <person name="Johnson J."/>
            <person name="Steglich C."/>
            <person name="Church G.M."/>
            <person name="Richardson P."/>
            <person name="Chisholm S.W."/>
        </authorList>
    </citation>
    <scope>NUCLEOTIDE SEQUENCE [LARGE SCALE GENOMIC DNA]</scope>
    <source>
        <strain>MIT 9301</strain>
    </source>
</reference>
<gene>
    <name evidence="1" type="primary">glgA</name>
    <name type="ordered locus">P9301_06351</name>
</gene>
<name>GLGA_PROM0</name>